<sequence>MIDNLQPLRGMKDLLPDDYQVHNYIINKARDVGVLYGYKQMSTPILEYTRVFNRCMGDSSDVISKEIYSFVDKSNNAIALRPEFTSGIIRSFISNGLHHKLPLKLFSTGPVFRYDRPQAGRQRQFHQLNYEYLGAKGAITDAETLKLAVDILKALEIEEDTTLELNSLGCSESRIVYQQKLVEYLNDFKDKLSGESKIRLNKNPMRILDSKSEIDQKIIANAPILSDYHTNESKKYFDELLKYLDILGIKYSINPRLVRGLDYYCHTVFEFTTQKLGSQATILAGGRYDMLSRIMGNYDVHAIGFAAGIERIALMKKYNIFVIKPVFVLPIGKNNICYALDIVDKLRLHNIISIIDPIGKIAKRIQRVLNEDAKFIIFVGDEEKMNNNLKFKDLKNQKEYIIDLEKVLELLK</sequence>
<protein>
    <recommendedName>
        <fullName evidence="1">Histidine--tRNA ligase</fullName>
        <ecNumber evidence="1">6.1.1.21</ecNumber>
    </recommendedName>
    <alternativeName>
        <fullName evidence="1">Histidyl-tRNA synthetase</fullName>
        <shortName evidence="1">HisRS</shortName>
    </alternativeName>
</protein>
<dbReference type="EC" id="6.1.1.21" evidence="1"/>
<dbReference type="EMBL" id="AE017197">
    <property type="protein sequence ID" value="AAU03778.1"/>
    <property type="molecule type" value="Genomic_DNA"/>
</dbReference>
<dbReference type="RefSeq" id="WP_011190762.1">
    <property type="nucleotide sequence ID" value="NC_006142.1"/>
</dbReference>
<dbReference type="SMR" id="Q68X64"/>
<dbReference type="KEGG" id="rty:RT0298"/>
<dbReference type="eggNOG" id="COG0124">
    <property type="taxonomic scope" value="Bacteria"/>
</dbReference>
<dbReference type="HOGENOM" id="CLU_025113_1_0_5"/>
<dbReference type="OrthoDB" id="9800814at2"/>
<dbReference type="Proteomes" id="UP000000604">
    <property type="component" value="Chromosome"/>
</dbReference>
<dbReference type="GO" id="GO:0005737">
    <property type="term" value="C:cytoplasm"/>
    <property type="evidence" value="ECO:0007669"/>
    <property type="project" value="UniProtKB-SubCell"/>
</dbReference>
<dbReference type="GO" id="GO:0005524">
    <property type="term" value="F:ATP binding"/>
    <property type="evidence" value="ECO:0007669"/>
    <property type="project" value="UniProtKB-UniRule"/>
</dbReference>
<dbReference type="GO" id="GO:0004821">
    <property type="term" value="F:histidine-tRNA ligase activity"/>
    <property type="evidence" value="ECO:0007669"/>
    <property type="project" value="UniProtKB-UniRule"/>
</dbReference>
<dbReference type="GO" id="GO:0006427">
    <property type="term" value="P:histidyl-tRNA aminoacylation"/>
    <property type="evidence" value="ECO:0007669"/>
    <property type="project" value="UniProtKB-UniRule"/>
</dbReference>
<dbReference type="CDD" id="cd00773">
    <property type="entry name" value="HisRS-like_core"/>
    <property type="match status" value="1"/>
</dbReference>
<dbReference type="CDD" id="cd00859">
    <property type="entry name" value="HisRS_anticodon"/>
    <property type="match status" value="1"/>
</dbReference>
<dbReference type="Gene3D" id="3.40.50.800">
    <property type="entry name" value="Anticodon-binding domain"/>
    <property type="match status" value="1"/>
</dbReference>
<dbReference type="Gene3D" id="3.30.930.10">
    <property type="entry name" value="Bira Bifunctional Protein, Domain 2"/>
    <property type="match status" value="1"/>
</dbReference>
<dbReference type="HAMAP" id="MF_00127">
    <property type="entry name" value="His_tRNA_synth"/>
    <property type="match status" value="1"/>
</dbReference>
<dbReference type="InterPro" id="IPR006195">
    <property type="entry name" value="aa-tRNA-synth_II"/>
</dbReference>
<dbReference type="InterPro" id="IPR045864">
    <property type="entry name" value="aa-tRNA-synth_II/BPL/LPL"/>
</dbReference>
<dbReference type="InterPro" id="IPR004154">
    <property type="entry name" value="Anticodon-bd"/>
</dbReference>
<dbReference type="InterPro" id="IPR036621">
    <property type="entry name" value="Anticodon-bd_dom_sf"/>
</dbReference>
<dbReference type="InterPro" id="IPR015807">
    <property type="entry name" value="His-tRNA-ligase"/>
</dbReference>
<dbReference type="InterPro" id="IPR041715">
    <property type="entry name" value="HisRS-like_core"/>
</dbReference>
<dbReference type="InterPro" id="IPR004516">
    <property type="entry name" value="HisRS/HisZ"/>
</dbReference>
<dbReference type="InterPro" id="IPR033656">
    <property type="entry name" value="HisRS_anticodon"/>
</dbReference>
<dbReference type="NCBIfam" id="TIGR00442">
    <property type="entry name" value="hisS"/>
    <property type="match status" value="1"/>
</dbReference>
<dbReference type="PANTHER" id="PTHR43707:SF1">
    <property type="entry name" value="HISTIDINE--TRNA LIGASE, MITOCHONDRIAL-RELATED"/>
    <property type="match status" value="1"/>
</dbReference>
<dbReference type="PANTHER" id="PTHR43707">
    <property type="entry name" value="HISTIDYL-TRNA SYNTHETASE"/>
    <property type="match status" value="1"/>
</dbReference>
<dbReference type="Pfam" id="PF03129">
    <property type="entry name" value="HGTP_anticodon"/>
    <property type="match status" value="1"/>
</dbReference>
<dbReference type="Pfam" id="PF13393">
    <property type="entry name" value="tRNA-synt_His"/>
    <property type="match status" value="1"/>
</dbReference>
<dbReference type="PIRSF" id="PIRSF001549">
    <property type="entry name" value="His-tRNA_synth"/>
    <property type="match status" value="1"/>
</dbReference>
<dbReference type="SUPFAM" id="SSF52954">
    <property type="entry name" value="Class II aaRS ABD-related"/>
    <property type="match status" value="1"/>
</dbReference>
<dbReference type="SUPFAM" id="SSF55681">
    <property type="entry name" value="Class II aaRS and biotin synthetases"/>
    <property type="match status" value="1"/>
</dbReference>
<dbReference type="PROSITE" id="PS50862">
    <property type="entry name" value="AA_TRNA_LIGASE_II"/>
    <property type="match status" value="1"/>
</dbReference>
<gene>
    <name evidence="1" type="primary">hisS</name>
    <name type="ordered locus">RT0298</name>
</gene>
<reference key="1">
    <citation type="journal article" date="2004" name="J. Bacteriol.">
        <title>Complete genome sequence of Rickettsia typhi and comparison with sequences of other Rickettsiae.</title>
        <authorList>
            <person name="McLeod M.P."/>
            <person name="Qin X."/>
            <person name="Karpathy S.E."/>
            <person name="Gioia J."/>
            <person name="Highlander S.K."/>
            <person name="Fox G.E."/>
            <person name="McNeill T.Z."/>
            <person name="Jiang H."/>
            <person name="Muzny D."/>
            <person name="Jacob L.S."/>
            <person name="Hawes A.C."/>
            <person name="Sodergren E."/>
            <person name="Gill R."/>
            <person name="Hume J."/>
            <person name="Morgan M."/>
            <person name="Fan G."/>
            <person name="Amin A.G."/>
            <person name="Gibbs R.A."/>
            <person name="Hong C."/>
            <person name="Yu X.-J."/>
            <person name="Walker D.H."/>
            <person name="Weinstock G.M."/>
        </authorList>
    </citation>
    <scope>NUCLEOTIDE SEQUENCE [LARGE SCALE GENOMIC DNA]</scope>
    <source>
        <strain>ATCC VR-144 / Wilmington</strain>
    </source>
</reference>
<feature type="chain" id="PRO_0000136241" description="Histidine--tRNA ligase">
    <location>
        <begin position="1"/>
        <end position="412"/>
    </location>
</feature>
<accession>Q68X64</accession>
<keyword id="KW-0030">Aminoacyl-tRNA synthetase</keyword>
<keyword id="KW-0067">ATP-binding</keyword>
<keyword id="KW-0963">Cytoplasm</keyword>
<keyword id="KW-0436">Ligase</keyword>
<keyword id="KW-0547">Nucleotide-binding</keyword>
<keyword id="KW-0648">Protein biosynthesis</keyword>
<organism>
    <name type="scientific">Rickettsia typhi (strain ATCC VR-144 / Wilmington)</name>
    <dbReference type="NCBI Taxonomy" id="257363"/>
    <lineage>
        <taxon>Bacteria</taxon>
        <taxon>Pseudomonadati</taxon>
        <taxon>Pseudomonadota</taxon>
        <taxon>Alphaproteobacteria</taxon>
        <taxon>Rickettsiales</taxon>
        <taxon>Rickettsiaceae</taxon>
        <taxon>Rickettsieae</taxon>
        <taxon>Rickettsia</taxon>
        <taxon>typhus group</taxon>
    </lineage>
</organism>
<name>SYH_RICTY</name>
<evidence type="ECO:0000255" key="1">
    <source>
        <dbReference type="HAMAP-Rule" id="MF_00127"/>
    </source>
</evidence>
<proteinExistence type="inferred from homology"/>
<comment type="catalytic activity">
    <reaction evidence="1">
        <text>tRNA(His) + L-histidine + ATP = L-histidyl-tRNA(His) + AMP + diphosphate + H(+)</text>
        <dbReference type="Rhea" id="RHEA:17313"/>
        <dbReference type="Rhea" id="RHEA-COMP:9665"/>
        <dbReference type="Rhea" id="RHEA-COMP:9689"/>
        <dbReference type="ChEBI" id="CHEBI:15378"/>
        <dbReference type="ChEBI" id="CHEBI:30616"/>
        <dbReference type="ChEBI" id="CHEBI:33019"/>
        <dbReference type="ChEBI" id="CHEBI:57595"/>
        <dbReference type="ChEBI" id="CHEBI:78442"/>
        <dbReference type="ChEBI" id="CHEBI:78527"/>
        <dbReference type="ChEBI" id="CHEBI:456215"/>
        <dbReference type="EC" id="6.1.1.21"/>
    </reaction>
</comment>
<comment type="subunit">
    <text evidence="1">Homodimer.</text>
</comment>
<comment type="subcellular location">
    <subcellularLocation>
        <location evidence="1">Cytoplasm</location>
    </subcellularLocation>
</comment>
<comment type="similarity">
    <text evidence="1">Belongs to the class-II aminoacyl-tRNA synthetase family.</text>
</comment>